<comment type="function">
    <text evidence="2">GTP hydrolase that promotes the GTP-dependent binding of aminoacyl-tRNA to the A-site of ribosomes during protein biosynthesis.</text>
</comment>
<comment type="catalytic activity">
    <reaction evidence="2">
        <text>GTP + H2O = GDP + phosphate + H(+)</text>
        <dbReference type="Rhea" id="RHEA:19669"/>
        <dbReference type="ChEBI" id="CHEBI:15377"/>
        <dbReference type="ChEBI" id="CHEBI:15378"/>
        <dbReference type="ChEBI" id="CHEBI:37565"/>
        <dbReference type="ChEBI" id="CHEBI:43474"/>
        <dbReference type="ChEBI" id="CHEBI:58189"/>
        <dbReference type="EC" id="3.6.5.3"/>
    </reaction>
    <physiologicalReaction direction="left-to-right" evidence="2">
        <dbReference type="Rhea" id="RHEA:19670"/>
    </physiologicalReaction>
</comment>
<comment type="subunit">
    <text evidence="2">Monomer.</text>
</comment>
<comment type="subcellular location">
    <subcellularLocation>
        <location evidence="2">Cytoplasm</location>
    </subcellularLocation>
</comment>
<comment type="similarity">
    <text evidence="2">Belongs to the TRAFAC class translation factor GTPase superfamily. Classic translation factor GTPase family. EF-Tu/EF-1A subfamily.</text>
</comment>
<accession>C0ZVT7</accession>
<evidence type="ECO:0000250" key="1"/>
<evidence type="ECO:0000255" key="2">
    <source>
        <dbReference type="HAMAP-Rule" id="MF_00118"/>
    </source>
</evidence>
<organism>
    <name type="scientific">Rhodococcus erythropolis (strain PR4 / NBRC 100887)</name>
    <dbReference type="NCBI Taxonomy" id="234621"/>
    <lineage>
        <taxon>Bacteria</taxon>
        <taxon>Bacillati</taxon>
        <taxon>Actinomycetota</taxon>
        <taxon>Actinomycetes</taxon>
        <taxon>Mycobacteriales</taxon>
        <taxon>Nocardiaceae</taxon>
        <taxon>Rhodococcus</taxon>
        <taxon>Rhodococcus erythropolis group</taxon>
    </lineage>
</organism>
<dbReference type="EC" id="3.6.5.3" evidence="2"/>
<dbReference type="EMBL" id="AP008957">
    <property type="protein sequence ID" value="BAH32472.1"/>
    <property type="molecule type" value="Genomic_DNA"/>
</dbReference>
<dbReference type="RefSeq" id="WP_019744283.1">
    <property type="nucleotide sequence ID" value="NC_012490.1"/>
</dbReference>
<dbReference type="SMR" id="C0ZVT7"/>
<dbReference type="GeneID" id="57488096"/>
<dbReference type="KEGG" id="rer:RER_17640"/>
<dbReference type="eggNOG" id="COG0050">
    <property type="taxonomic scope" value="Bacteria"/>
</dbReference>
<dbReference type="HOGENOM" id="CLU_007265_0_1_11"/>
<dbReference type="Proteomes" id="UP000002204">
    <property type="component" value="Chromosome"/>
</dbReference>
<dbReference type="GO" id="GO:0005829">
    <property type="term" value="C:cytosol"/>
    <property type="evidence" value="ECO:0007669"/>
    <property type="project" value="TreeGrafter"/>
</dbReference>
<dbReference type="GO" id="GO:0005525">
    <property type="term" value="F:GTP binding"/>
    <property type="evidence" value="ECO:0007669"/>
    <property type="project" value="UniProtKB-UniRule"/>
</dbReference>
<dbReference type="GO" id="GO:0003924">
    <property type="term" value="F:GTPase activity"/>
    <property type="evidence" value="ECO:0007669"/>
    <property type="project" value="InterPro"/>
</dbReference>
<dbReference type="GO" id="GO:0003746">
    <property type="term" value="F:translation elongation factor activity"/>
    <property type="evidence" value="ECO:0007669"/>
    <property type="project" value="UniProtKB-UniRule"/>
</dbReference>
<dbReference type="CDD" id="cd01884">
    <property type="entry name" value="EF_Tu"/>
    <property type="match status" value="1"/>
</dbReference>
<dbReference type="CDD" id="cd03697">
    <property type="entry name" value="EFTU_II"/>
    <property type="match status" value="1"/>
</dbReference>
<dbReference type="CDD" id="cd03707">
    <property type="entry name" value="EFTU_III"/>
    <property type="match status" value="1"/>
</dbReference>
<dbReference type="FunFam" id="2.40.30.10:FF:000001">
    <property type="entry name" value="Elongation factor Tu"/>
    <property type="match status" value="1"/>
</dbReference>
<dbReference type="FunFam" id="3.40.50.300:FF:000003">
    <property type="entry name" value="Elongation factor Tu"/>
    <property type="match status" value="1"/>
</dbReference>
<dbReference type="Gene3D" id="3.40.50.300">
    <property type="entry name" value="P-loop containing nucleotide triphosphate hydrolases"/>
    <property type="match status" value="1"/>
</dbReference>
<dbReference type="Gene3D" id="2.40.30.10">
    <property type="entry name" value="Translation factors"/>
    <property type="match status" value="2"/>
</dbReference>
<dbReference type="HAMAP" id="MF_00118_B">
    <property type="entry name" value="EF_Tu_B"/>
    <property type="match status" value="1"/>
</dbReference>
<dbReference type="InterPro" id="IPR041709">
    <property type="entry name" value="EF-Tu_GTP-bd"/>
</dbReference>
<dbReference type="InterPro" id="IPR050055">
    <property type="entry name" value="EF-Tu_GTPase"/>
</dbReference>
<dbReference type="InterPro" id="IPR004161">
    <property type="entry name" value="EFTu-like_2"/>
</dbReference>
<dbReference type="InterPro" id="IPR033720">
    <property type="entry name" value="EFTU_2"/>
</dbReference>
<dbReference type="InterPro" id="IPR031157">
    <property type="entry name" value="G_TR_CS"/>
</dbReference>
<dbReference type="InterPro" id="IPR027417">
    <property type="entry name" value="P-loop_NTPase"/>
</dbReference>
<dbReference type="InterPro" id="IPR005225">
    <property type="entry name" value="Small_GTP-bd"/>
</dbReference>
<dbReference type="InterPro" id="IPR000795">
    <property type="entry name" value="T_Tr_GTP-bd_dom"/>
</dbReference>
<dbReference type="InterPro" id="IPR009000">
    <property type="entry name" value="Transl_B-barrel_sf"/>
</dbReference>
<dbReference type="InterPro" id="IPR009001">
    <property type="entry name" value="Transl_elong_EF1A/Init_IF2_C"/>
</dbReference>
<dbReference type="InterPro" id="IPR004541">
    <property type="entry name" value="Transl_elong_EFTu/EF1A_bac/org"/>
</dbReference>
<dbReference type="InterPro" id="IPR004160">
    <property type="entry name" value="Transl_elong_EFTu/EF1A_C"/>
</dbReference>
<dbReference type="NCBIfam" id="TIGR00485">
    <property type="entry name" value="EF-Tu"/>
    <property type="match status" value="1"/>
</dbReference>
<dbReference type="NCBIfam" id="NF000766">
    <property type="entry name" value="PRK00049.1"/>
    <property type="match status" value="1"/>
</dbReference>
<dbReference type="NCBIfam" id="NF009372">
    <property type="entry name" value="PRK12735.1"/>
    <property type="match status" value="1"/>
</dbReference>
<dbReference type="NCBIfam" id="NF009373">
    <property type="entry name" value="PRK12736.1"/>
    <property type="match status" value="1"/>
</dbReference>
<dbReference type="NCBIfam" id="TIGR00231">
    <property type="entry name" value="small_GTP"/>
    <property type="match status" value="1"/>
</dbReference>
<dbReference type="PANTHER" id="PTHR43721:SF22">
    <property type="entry name" value="ELONGATION FACTOR TU, MITOCHONDRIAL"/>
    <property type="match status" value="1"/>
</dbReference>
<dbReference type="PANTHER" id="PTHR43721">
    <property type="entry name" value="ELONGATION FACTOR TU-RELATED"/>
    <property type="match status" value="1"/>
</dbReference>
<dbReference type="Pfam" id="PF00009">
    <property type="entry name" value="GTP_EFTU"/>
    <property type="match status" value="1"/>
</dbReference>
<dbReference type="Pfam" id="PF03144">
    <property type="entry name" value="GTP_EFTU_D2"/>
    <property type="match status" value="1"/>
</dbReference>
<dbReference type="Pfam" id="PF03143">
    <property type="entry name" value="GTP_EFTU_D3"/>
    <property type="match status" value="1"/>
</dbReference>
<dbReference type="PRINTS" id="PR00315">
    <property type="entry name" value="ELONGATNFCT"/>
</dbReference>
<dbReference type="SUPFAM" id="SSF50465">
    <property type="entry name" value="EF-Tu/eEF-1alpha/eIF2-gamma C-terminal domain"/>
    <property type="match status" value="1"/>
</dbReference>
<dbReference type="SUPFAM" id="SSF52540">
    <property type="entry name" value="P-loop containing nucleoside triphosphate hydrolases"/>
    <property type="match status" value="1"/>
</dbReference>
<dbReference type="SUPFAM" id="SSF50447">
    <property type="entry name" value="Translation proteins"/>
    <property type="match status" value="1"/>
</dbReference>
<dbReference type="PROSITE" id="PS00301">
    <property type="entry name" value="G_TR_1"/>
    <property type="match status" value="1"/>
</dbReference>
<dbReference type="PROSITE" id="PS51722">
    <property type="entry name" value="G_TR_2"/>
    <property type="match status" value="1"/>
</dbReference>
<keyword id="KW-0963">Cytoplasm</keyword>
<keyword id="KW-0251">Elongation factor</keyword>
<keyword id="KW-0342">GTP-binding</keyword>
<keyword id="KW-0378">Hydrolase</keyword>
<keyword id="KW-0460">Magnesium</keyword>
<keyword id="KW-0479">Metal-binding</keyword>
<keyword id="KW-0547">Nucleotide-binding</keyword>
<keyword id="KW-0648">Protein biosynthesis</keyword>
<reference key="1">
    <citation type="submission" date="2005-03" db="EMBL/GenBank/DDBJ databases">
        <title>Comparison of the complete genome sequences of Rhodococcus erythropolis PR4 and Rhodococcus opacus B4.</title>
        <authorList>
            <person name="Takarada H."/>
            <person name="Sekine M."/>
            <person name="Hosoyama A."/>
            <person name="Yamada R."/>
            <person name="Fujisawa T."/>
            <person name="Omata S."/>
            <person name="Shimizu A."/>
            <person name="Tsukatani N."/>
            <person name="Tanikawa S."/>
            <person name="Fujita N."/>
            <person name="Harayama S."/>
        </authorList>
    </citation>
    <scope>NUCLEOTIDE SEQUENCE [LARGE SCALE GENOMIC DNA]</scope>
    <source>
        <strain>PR4 / NBRC 100887</strain>
    </source>
</reference>
<protein>
    <recommendedName>
        <fullName evidence="2">Elongation factor Tu</fullName>
        <shortName evidence="2">EF-Tu</shortName>
        <ecNumber evidence="2">3.6.5.3</ecNumber>
    </recommendedName>
</protein>
<name>EFTU_RHOE4</name>
<proteinExistence type="inferred from homology"/>
<feature type="chain" id="PRO_1000203018" description="Elongation factor Tu">
    <location>
        <begin position="1"/>
        <end position="396"/>
    </location>
</feature>
<feature type="domain" description="tr-type G">
    <location>
        <begin position="10"/>
        <end position="205"/>
    </location>
</feature>
<feature type="region of interest" description="G1" evidence="1">
    <location>
        <begin position="19"/>
        <end position="26"/>
    </location>
</feature>
<feature type="region of interest" description="G2" evidence="1">
    <location>
        <begin position="62"/>
        <end position="66"/>
    </location>
</feature>
<feature type="region of interest" description="G3" evidence="1">
    <location>
        <begin position="83"/>
        <end position="86"/>
    </location>
</feature>
<feature type="region of interest" description="G4" evidence="1">
    <location>
        <begin position="138"/>
        <end position="141"/>
    </location>
</feature>
<feature type="region of interest" description="G5" evidence="1">
    <location>
        <begin position="175"/>
        <end position="177"/>
    </location>
</feature>
<feature type="binding site" evidence="2">
    <location>
        <begin position="19"/>
        <end position="26"/>
    </location>
    <ligand>
        <name>GTP</name>
        <dbReference type="ChEBI" id="CHEBI:37565"/>
    </ligand>
</feature>
<feature type="binding site" evidence="2">
    <location>
        <position position="26"/>
    </location>
    <ligand>
        <name>Mg(2+)</name>
        <dbReference type="ChEBI" id="CHEBI:18420"/>
    </ligand>
</feature>
<feature type="binding site" evidence="2">
    <location>
        <begin position="83"/>
        <end position="87"/>
    </location>
    <ligand>
        <name>GTP</name>
        <dbReference type="ChEBI" id="CHEBI:37565"/>
    </ligand>
</feature>
<feature type="binding site" evidence="2">
    <location>
        <begin position="138"/>
        <end position="141"/>
    </location>
    <ligand>
        <name>GTP</name>
        <dbReference type="ChEBI" id="CHEBI:37565"/>
    </ligand>
</feature>
<sequence>MAKAKFERTKPHVNIGTIGHVDHGKTTTTAAITKVLADAFPDLNEASAFDQIDKAPEEKARGITINISHVEYQTEKRHYAHVDAPGHADYIKNMITGAAQMDGAILVVAATDGPMPQTREHVLLARQVGVPYILVALNKADMVDDDEILELVEMEVRELLAAQEFDEEAPVIPISALKALEGDPKWTQSILDLMAAVDESIPDPVRETDKPFLMPVEDVFTITGRGTVVTGRIERGSVNVNEEVEIVGIKETSTKTTVTGIEMFRKLLDSGQAGDNVGLLVRGIKREDVERGQVVVKPGTTTPHTEFEGQAYILSKDEGGRHTPFFNNYRPQFYFRTTDVTGVVTLPEGTEMVMPGDNTEMSVKLIQPVAMDEGLRFAIREGGRTVGAGKVAKIIK</sequence>
<gene>
    <name evidence="2" type="primary">tuf</name>
    <name type="ordered locus">RER_17640</name>
</gene>